<proteinExistence type="inferred from homology"/>
<name>COQ4_LEIBR</name>
<dbReference type="EC" id="4.1.1.130" evidence="1"/>
<dbReference type="EMBL" id="FR798983">
    <property type="protein sequence ID" value="CAM41887.1"/>
    <property type="molecule type" value="Genomic_DNA"/>
</dbReference>
<dbReference type="RefSeq" id="XP_001562761.1">
    <property type="nucleotide sequence ID" value="XM_001562711.1"/>
</dbReference>
<dbReference type="SMR" id="A4H5X0"/>
<dbReference type="FunCoup" id="A4H5X0">
    <property type="interactions" value="172"/>
</dbReference>
<dbReference type="STRING" id="5660.A4H5X0"/>
<dbReference type="GeneID" id="5413240"/>
<dbReference type="KEGG" id="lbz:LBRM_09_1490"/>
<dbReference type="VEuPathDB" id="TriTrypDB:LbrM.09.1490"/>
<dbReference type="InParanoid" id="A4H5X0"/>
<dbReference type="OMA" id="WFEMINT"/>
<dbReference type="UniPathway" id="UPA00232"/>
<dbReference type="Proteomes" id="UP000007258">
    <property type="component" value="Chromosome 9"/>
</dbReference>
<dbReference type="GO" id="GO:0031314">
    <property type="term" value="C:extrinsic component of mitochondrial inner membrane"/>
    <property type="evidence" value="ECO:0007669"/>
    <property type="project" value="UniProtKB-UniRule"/>
</dbReference>
<dbReference type="GO" id="GO:0006744">
    <property type="term" value="P:ubiquinone biosynthetic process"/>
    <property type="evidence" value="ECO:0007669"/>
    <property type="project" value="UniProtKB-UniRule"/>
</dbReference>
<dbReference type="HAMAP" id="MF_03111">
    <property type="entry name" value="Coq4"/>
    <property type="match status" value="1"/>
</dbReference>
<dbReference type="InterPro" id="IPR007715">
    <property type="entry name" value="Coq4"/>
</dbReference>
<dbReference type="InterPro" id="IPR027540">
    <property type="entry name" value="Coq4_euk"/>
</dbReference>
<dbReference type="PANTHER" id="PTHR12922">
    <property type="entry name" value="UBIQUINONE BIOSYNTHESIS PROTEIN"/>
    <property type="match status" value="1"/>
</dbReference>
<dbReference type="PANTHER" id="PTHR12922:SF7">
    <property type="entry name" value="UBIQUINONE BIOSYNTHESIS PROTEIN COQ4 HOMOLOG, MITOCHONDRIAL"/>
    <property type="match status" value="1"/>
</dbReference>
<dbReference type="Pfam" id="PF05019">
    <property type="entry name" value="Coq4"/>
    <property type="match status" value="1"/>
</dbReference>
<gene>
    <name type="ORF">LbrM09_V2.1490</name>
    <name type="ORF">LbrM_09_1490</name>
</gene>
<keyword id="KW-0456">Lyase</keyword>
<keyword id="KW-0472">Membrane</keyword>
<keyword id="KW-0479">Metal-binding</keyword>
<keyword id="KW-0496">Mitochondrion</keyword>
<keyword id="KW-0999">Mitochondrion inner membrane</keyword>
<keyword id="KW-1185">Reference proteome</keyword>
<keyword id="KW-0831">Ubiquinone biosynthesis</keyword>
<keyword id="KW-0862">Zinc</keyword>
<sequence>MKNCMMADQRGRSILKHQPVVGDEVLEFSRGLAPSTFGFRYAAYMDRNHFLPSGRAAVKHIADPTLAYVMMRHRQCHDFLHVITGCGRSVEEELAVKVFEWKHTGLPLGLLSLLGGASRLSATQLAHMRLFWEWASHNAPCSRHDKPAVPMYLNVPWEDMLAKEYDEVAAYTGITPLPVFLKKHQKQ</sequence>
<reference key="1">
    <citation type="journal article" date="2007" name="Nat. Genet.">
        <title>Comparative genomic analysis of three Leishmania species that cause diverse human disease.</title>
        <authorList>
            <person name="Peacock C.S."/>
            <person name="Seeger K."/>
            <person name="Harris D."/>
            <person name="Murphy L."/>
            <person name="Ruiz J.C."/>
            <person name="Quail M.A."/>
            <person name="Peters N."/>
            <person name="Adlem E."/>
            <person name="Tivey A."/>
            <person name="Aslett M."/>
            <person name="Kerhornou A."/>
            <person name="Ivens A."/>
            <person name="Fraser A."/>
            <person name="Rajandream M.-A."/>
            <person name="Carver T."/>
            <person name="Norbertczak H."/>
            <person name="Chillingworth T."/>
            <person name="Hance Z."/>
            <person name="Jagels K."/>
            <person name="Moule S."/>
            <person name="Ormond D."/>
            <person name="Rutter S."/>
            <person name="Sqaures R."/>
            <person name="Whitehead S."/>
            <person name="Rabbinowitsch E."/>
            <person name="Arrowsmith C."/>
            <person name="White B."/>
            <person name="Thurston S."/>
            <person name="Bringaud F."/>
            <person name="Baldauf S.L."/>
            <person name="Faulconbridge A."/>
            <person name="Jeffares D."/>
            <person name="Depledge D.P."/>
            <person name="Oyola S.O."/>
            <person name="Hilley J.D."/>
            <person name="Brito L.O."/>
            <person name="Tosi L.R.O."/>
            <person name="Barrell B."/>
            <person name="Cruz A.K."/>
            <person name="Mottram J.C."/>
            <person name="Smith D.F."/>
            <person name="Berriman M."/>
        </authorList>
    </citation>
    <scope>NUCLEOTIDE SEQUENCE [LARGE SCALE GENOMIC DNA]</scope>
    <source>
        <strain>MHOM/BR/75/M2904</strain>
    </source>
</reference>
<comment type="function">
    <text evidence="1">Lyase that catalyzes the C1-decarboxylation of 4-hydroxy-3-methoxy-5-(all-trans-polyprenyl)benzoic acid into 2-methoxy-6-(all-trans-polyprenyl)phenol during ubiquinone biosynthesis.</text>
</comment>
<comment type="catalytic activity">
    <reaction evidence="1">
        <text>a 4-hydroxy-3-methoxy-5-(all-trans-polyprenyl)benzoate + H(+) = a 2-methoxy-6-(all-trans-polyprenyl)phenol + CO2</text>
        <dbReference type="Rhea" id="RHEA:81179"/>
        <dbReference type="Rhea" id="RHEA-COMP:9551"/>
        <dbReference type="Rhea" id="RHEA-COMP:10931"/>
        <dbReference type="ChEBI" id="CHEBI:15378"/>
        <dbReference type="ChEBI" id="CHEBI:16526"/>
        <dbReference type="ChEBI" id="CHEBI:62731"/>
        <dbReference type="ChEBI" id="CHEBI:84443"/>
        <dbReference type="EC" id="4.1.1.130"/>
    </reaction>
</comment>
<comment type="cofactor">
    <cofactor evidence="1">
        <name>Zn(2+)</name>
        <dbReference type="ChEBI" id="CHEBI:29105"/>
    </cofactor>
</comment>
<comment type="pathway">
    <text evidence="1">Cofactor biosynthesis; ubiquinone biosynthesis.</text>
</comment>
<comment type="subunit">
    <text evidence="1">Component of a multi-subunit COQ enzyme complex.</text>
</comment>
<comment type="subcellular location">
    <subcellularLocation>
        <location evidence="1">Mitochondrion inner membrane</location>
        <topology evidence="1">Peripheral membrane protein</topology>
        <orientation evidence="1">Matrix side</orientation>
    </subcellularLocation>
</comment>
<comment type="miscellaneous">
    <text evidence="1">This protein may be expected to contain an N-terminal transit peptide but none has been predicted.</text>
</comment>
<comment type="similarity">
    <text evidence="1">Belongs to the COQ4 family.</text>
</comment>
<protein>
    <recommendedName>
        <fullName evidence="1">Ubiquinone biosynthesis protein COQ4 homolog, mitochondrial</fullName>
    </recommendedName>
    <alternativeName>
        <fullName>4-hydroxy-3-methoxy-5-polyprenylbenzoate decarboxylase</fullName>
        <ecNumber evidence="1">4.1.1.130</ecNumber>
    </alternativeName>
    <alternativeName>
        <fullName evidence="1">Coenzyme Q biosynthesis protein 4 homolog</fullName>
    </alternativeName>
</protein>
<evidence type="ECO:0000255" key="1">
    <source>
        <dbReference type="HAMAP-Rule" id="MF_03111"/>
    </source>
</evidence>
<accession>A4H5X0</accession>
<feature type="chain" id="PRO_0000388083" description="Ubiquinone biosynthesis protein COQ4 homolog, mitochondrial">
    <location>
        <begin position="1"/>
        <end position="187"/>
    </location>
</feature>
<feature type="binding site" evidence="1">
    <location>
        <position position="77"/>
    </location>
    <ligand>
        <name>Zn(2+)</name>
        <dbReference type="ChEBI" id="CHEBI:29105"/>
    </ligand>
</feature>
<feature type="binding site" evidence="1">
    <location>
        <position position="78"/>
    </location>
    <ligand>
        <name>Zn(2+)</name>
        <dbReference type="ChEBI" id="CHEBI:29105"/>
    </ligand>
</feature>
<feature type="binding site" evidence="1">
    <location>
        <position position="81"/>
    </location>
    <ligand>
        <name>Zn(2+)</name>
        <dbReference type="ChEBI" id="CHEBI:29105"/>
    </ligand>
</feature>
<feature type="binding site" evidence="1">
    <location>
        <position position="93"/>
    </location>
    <ligand>
        <name>Zn(2+)</name>
        <dbReference type="ChEBI" id="CHEBI:29105"/>
    </ligand>
</feature>
<organism>
    <name type="scientific">Leishmania braziliensis</name>
    <dbReference type="NCBI Taxonomy" id="5660"/>
    <lineage>
        <taxon>Eukaryota</taxon>
        <taxon>Discoba</taxon>
        <taxon>Euglenozoa</taxon>
        <taxon>Kinetoplastea</taxon>
        <taxon>Metakinetoplastina</taxon>
        <taxon>Trypanosomatida</taxon>
        <taxon>Trypanosomatidae</taxon>
        <taxon>Leishmaniinae</taxon>
        <taxon>Leishmania</taxon>
        <taxon>Leishmania braziliensis species complex</taxon>
    </lineage>
</organism>